<organism>
    <name type="scientific">Mus musculus</name>
    <name type="common">Mouse</name>
    <dbReference type="NCBI Taxonomy" id="10090"/>
    <lineage>
        <taxon>Eukaryota</taxon>
        <taxon>Metazoa</taxon>
        <taxon>Chordata</taxon>
        <taxon>Craniata</taxon>
        <taxon>Vertebrata</taxon>
        <taxon>Euteleostomi</taxon>
        <taxon>Mammalia</taxon>
        <taxon>Eutheria</taxon>
        <taxon>Euarchontoglires</taxon>
        <taxon>Glires</taxon>
        <taxon>Rodentia</taxon>
        <taxon>Myomorpha</taxon>
        <taxon>Muroidea</taxon>
        <taxon>Muridae</taxon>
        <taxon>Murinae</taxon>
        <taxon>Mus</taxon>
        <taxon>Mus</taxon>
    </lineage>
</organism>
<accession>Q920P3</accession>
<accession>Q80ZL2</accession>
<accession>Q812F0</accession>
<accession>Q8C1C9</accession>
<accession>Q920P4</accession>
<accession>Q9QXL0</accession>
<gene>
    <name type="primary">Brinp1</name>
    <name type="synonym">Brinp</name>
    <name type="synonym">Dbc1</name>
    <name type="synonym">Dbccr1</name>
    <name type="synonym">Fam5a</name>
</gene>
<evidence type="ECO:0000250" key="1">
    <source>
        <dbReference type="UniProtKB" id="O60477"/>
    </source>
</evidence>
<evidence type="ECO:0000255" key="2"/>
<evidence type="ECO:0000269" key="3">
    <source>
    </source>
</evidence>
<evidence type="ECO:0000269" key="4">
    <source>
    </source>
</evidence>
<evidence type="ECO:0000269" key="5">
    <source>
    </source>
</evidence>
<evidence type="ECO:0000269" key="6">
    <source>
    </source>
</evidence>
<evidence type="ECO:0000269" key="7">
    <source>
    </source>
</evidence>
<evidence type="ECO:0000303" key="8">
    <source>
    </source>
</evidence>
<evidence type="ECO:0000305" key="9"/>
<sequence>MNWRFVELLYFLFVWGRISVQPSRQEPAGTDQHVSKEFDWLISDRGPFHHSRSYLSFVERHRQGFTTRYKIYREFARWKVRNTAIERRDLVRHPVPLMPEFQRSIRLLGRRPTTQQFIDTIIKKYGTHLLISATLGGEEALTMYMDKSRLDRKSGNATQSVEALHQLASSYFVDRDGTMRRLHEIQISTGAIKVTETRTGPLGCNSYDNLDSVSSVLLQSTESKLHLQGLQIIFPQYLQEKFVQSALSYIMCNGEGEYVCQNSQCRCQCAEEFPQCNCPITDIQIMEFTLANMAKAWTEAYKDLENSDEFKSFMKRLPSNHFLTIGSIHQHWGNDWDLQSRYKLLQSATEAQRQKIQRTARKLFGLSVRCRHNPNHQLPRERTIQQWLARVQSLLYCNENGFWGTFLESQRSCVCHGSTTLCQRPIPCIIGGNNSCAMCSLANISLCGSCNKGYKLYRGRCEPQNVDSERSEQFISFETDLDFQDLELKYLLQKMDSRLYVHTTFISNEIRLDTFFDPRWRKRMSLTLKSNKNRMDFIHMVIGMSMRICQMRNSSLDPMFFVYVNPFSGSHSEGWNMPFGEFGYPRWEKIRLQNSQCYNWTLLLGNRWKTFFETVHIYLRSRTRLPTLRNETGQGPVDLSDPSKRQFYIKISDVQVFGYSLRFNADLLRSAVQQVNQSYTQGGQFYSSSSVMLLMLDIRDRINRLAPPVAPGKPQLDLFSCMLKHRLKLTNSEIIRVNHALDLYNTEILKQSDQMTAKLC</sequence>
<name>BRNP1_MOUSE</name>
<dbReference type="EMBL" id="AB060587">
    <property type="protein sequence ID" value="BAB70600.1"/>
    <property type="molecule type" value="Genomic_DNA"/>
</dbReference>
<dbReference type="EMBL" id="AB060589">
    <property type="protein sequence ID" value="BAB70601.1"/>
    <property type="molecule type" value="mRNA"/>
</dbReference>
<dbReference type="EMBL" id="AB088118">
    <property type="protein sequence ID" value="BAC55204.1"/>
    <property type="molecule type" value="Genomic_DNA"/>
</dbReference>
<dbReference type="EMBL" id="AF202896">
    <property type="protein sequence ID" value="AAF17579.1"/>
    <property type="molecule type" value="mRNA"/>
</dbReference>
<dbReference type="EMBL" id="AK028321">
    <property type="protein sequence ID" value="BAC25879.1"/>
    <property type="molecule type" value="mRNA"/>
</dbReference>
<dbReference type="EMBL" id="AK045420">
    <property type="protein sequence ID" value="BAC32355.1"/>
    <property type="molecule type" value="mRNA"/>
</dbReference>
<dbReference type="EMBL" id="BX088573">
    <property type="status" value="NOT_ANNOTATED_CDS"/>
    <property type="molecule type" value="Genomic_DNA"/>
</dbReference>
<dbReference type="EMBL" id="BX649413">
    <property type="status" value="NOT_ANNOTATED_CDS"/>
    <property type="molecule type" value="Genomic_DNA"/>
</dbReference>
<dbReference type="EMBL" id="BC048789">
    <property type="protein sequence ID" value="AAH48789.1"/>
    <property type="molecule type" value="mRNA"/>
</dbReference>
<dbReference type="EMBL" id="BC079630">
    <property type="protein sequence ID" value="AAH79630.1"/>
    <property type="molecule type" value="mRNA"/>
</dbReference>
<dbReference type="CCDS" id="CCDS18272.1">
    <molecule id="Q920P3-1"/>
</dbReference>
<dbReference type="RefSeq" id="NP_064351.2">
    <molecule id="Q920P3-1"/>
    <property type="nucleotide sequence ID" value="NM_019967.2"/>
</dbReference>
<dbReference type="BioGRID" id="208138">
    <property type="interactions" value="5"/>
</dbReference>
<dbReference type="FunCoup" id="Q920P3">
    <property type="interactions" value="682"/>
</dbReference>
<dbReference type="STRING" id="10090.ENSMUSP00000030036"/>
<dbReference type="GlyConnect" id="2157">
    <property type="glycosylation" value="5 N-Linked glycans (2 sites)"/>
</dbReference>
<dbReference type="GlyCosmos" id="Q920P3">
    <property type="glycosylation" value="7 sites, 5 glycans"/>
</dbReference>
<dbReference type="GlyGen" id="Q920P3">
    <property type="glycosylation" value="8 sites, 10 N-linked glycans (5 sites), 1 O-linked glycan (1 site)"/>
</dbReference>
<dbReference type="iPTMnet" id="Q920P3"/>
<dbReference type="PhosphoSitePlus" id="Q920P3"/>
<dbReference type="SwissPalm" id="Q920P3"/>
<dbReference type="PaxDb" id="10090-ENSMUSP00000030036"/>
<dbReference type="PeptideAtlas" id="Q920P3"/>
<dbReference type="ProteomicsDB" id="273704">
    <molecule id="Q920P3-1"/>
</dbReference>
<dbReference type="ProteomicsDB" id="273705">
    <molecule id="Q920P3-2"/>
</dbReference>
<dbReference type="Antibodypedia" id="30047">
    <property type="antibodies" value="220 antibodies from 26 providers"/>
</dbReference>
<dbReference type="DNASU" id="56710"/>
<dbReference type="Ensembl" id="ENSMUST00000030036.6">
    <molecule id="Q920P3-1"/>
    <property type="protein sequence ID" value="ENSMUSP00000030036.6"/>
    <property type="gene ID" value="ENSMUSG00000028351.6"/>
</dbReference>
<dbReference type="GeneID" id="56710"/>
<dbReference type="KEGG" id="mmu:56710"/>
<dbReference type="UCSC" id="uc008thw.1">
    <molecule id="Q920P3-1"/>
    <property type="organism name" value="mouse"/>
</dbReference>
<dbReference type="UCSC" id="uc008thx.1">
    <molecule id="Q920P3-2"/>
    <property type="organism name" value="mouse"/>
</dbReference>
<dbReference type="AGR" id="MGI:1928478"/>
<dbReference type="CTD" id="1620"/>
<dbReference type="MGI" id="MGI:1928478">
    <property type="gene designation" value="Brinp1"/>
</dbReference>
<dbReference type="VEuPathDB" id="HostDB:ENSMUSG00000028351"/>
<dbReference type="eggNOG" id="ENOG502QT9H">
    <property type="taxonomic scope" value="Eukaryota"/>
</dbReference>
<dbReference type="GeneTree" id="ENSGT00940000158084"/>
<dbReference type="HOGENOM" id="CLU_018347_0_0_1"/>
<dbReference type="InParanoid" id="Q920P3"/>
<dbReference type="OMA" id="MSESWAS"/>
<dbReference type="OrthoDB" id="8503728at2759"/>
<dbReference type="PhylomeDB" id="Q920P3"/>
<dbReference type="TreeFam" id="TF331600"/>
<dbReference type="BioGRID-ORCS" id="56710">
    <property type="hits" value="3 hits in 76 CRISPR screens"/>
</dbReference>
<dbReference type="CD-CODE" id="CE726F99">
    <property type="entry name" value="Postsynaptic density"/>
</dbReference>
<dbReference type="ChiTaRS" id="Brinp1">
    <property type="organism name" value="mouse"/>
</dbReference>
<dbReference type="PRO" id="PR:Q920P3"/>
<dbReference type="Proteomes" id="UP000000589">
    <property type="component" value="Chromosome 4"/>
</dbReference>
<dbReference type="RNAct" id="Q920P3">
    <property type="molecule type" value="protein"/>
</dbReference>
<dbReference type="Bgee" id="ENSMUSG00000028351">
    <property type="expression patterns" value="Expressed in visual cortex and 140 other cell types or tissues"/>
</dbReference>
<dbReference type="GO" id="GO:0005737">
    <property type="term" value="C:cytoplasm"/>
    <property type="evidence" value="ECO:0000250"/>
    <property type="project" value="UniProtKB"/>
</dbReference>
<dbReference type="GO" id="GO:0098978">
    <property type="term" value="C:glutamatergic synapse"/>
    <property type="evidence" value="ECO:0000314"/>
    <property type="project" value="SynGO"/>
</dbReference>
<dbReference type="GO" id="GO:0045202">
    <property type="term" value="C:synapse"/>
    <property type="evidence" value="ECO:0000314"/>
    <property type="project" value="SynGO"/>
</dbReference>
<dbReference type="GO" id="GO:0001662">
    <property type="term" value="P:behavioral fear response"/>
    <property type="evidence" value="ECO:0000315"/>
    <property type="project" value="MGI"/>
</dbReference>
<dbReference type="GO" id="GO:0007420">
    <property type="term" value="P:brain development"/>
    <property type="evidence" value="ECO:0000315"/>
    <property type="project" value="UniProtKB"/>
</dbReference>
<dbReference type="GO" id="GO:0008283">
    <property type="term" value="P:cell population proliferation"/>
    <property type="evidence" value="ECO:0000315"/>
    <property type="project" value="MGI"/>
</dbReference>
<dbReference type="GO" id="GO:0071300">
    <property type="term" value="P:cellular response to retinoic acid"/>
    <property type="evidence" value="ECO:0000314"/>
    <property type="project" value="UniProtKB"/>
</dbReference>
<dbReference type="GO" id="GO:0021954">
    <property type="term" value="P:central nervous system neuron development"/>
    <property type="evidence" value="ECO:0000314"/>
    <property type="project" value="UniProtKB"/>
</dbReference>
<dbReference type="GO" id="GO:0035640">
    <property type="term" value="P:exploration behavior"/>
    <property type="evidence" value="ECO:0000315"/>
    <property type="project" value="MGI"/>
</dbReference>
<dbReference type="GO" id="GO:0010467">
    <property type="term" value="P:gene expression"/>
    <property type="evidence" value="ECO:0000315"/>
    <property type="project" value="MGI"/>
</dbReference>
<dbReference type="GO" id="GO:0048873">
    <property type="term" value="P:homeostasis of number of cells within a tissue"/>
    <property type="evidence" value="ECO:0000315"/>
    <property type="project" value="MGI"/>
</dbReference>
<dbReference type="GO" id="GO:0042711">
    <property type="term" value="P:maternal behavior"/>
    <property type="evidence" value="ECO:0000315"/>
    <property type="project" value="MGI"/>
</dbReference>
<dbReference type="GO" id="GO:0045930">
    <property type="term" value="P:negative regulation of mitotic cell cycle"/>
    <property type="evidence" value="ECO:0000314"/>
    <property type="project" value="UniProtKB"/>
</dbReference>
<dbReference type="GO" id="GO:0050768">
    <property type="term" value="P:negative regulation of neurogenesis"/>
    <property type="evidence" value="ECO:0000315"/>
    <property type="project" value="MGI"/>
</dbReference>
<dbReference type="GO" id="GO:0022008">
    <property type="term" value="P:neurogenesis"/>
    <property type="evidence" value="ECO:0000315"/>
    <property type="project" value="MGI"/>
</dbReference>
<dbReference type="GO" id="GO:0045666">
    <property type="term" value="P:positive regulation of neuron differentiation"/>
    <property type="evidence" value="ECO:0007669"/>
    <property type="project" value="InterPro"/>
</dbReference>
<dbReference type="GO" id="GO:0010498">
    <property type="term" value="P:proteasomal protein catabolic process"/>
    <property type="evidence" value="ECO:0000315"/>
    <property type="project" value="MGI"/>
</dbReference>
<dbReference type="GO" id="GO:0050821">
    <property type="term" value="P:protein stabilization"/>
    <property type="evidence" value="ECO:0000315"/>
    <property type="project" value="MGI"/>
</dbReference>
<dbReference type="GO" id="GO:0007614">
    <property type="term" value="P:short-term memory"/>
    <property type="evidence" value="ECO:0000315"/>
    <property type="project" value="MGI"/>
</dbReference>
<dbReference type="GO" id="GO:0035176">
    <property type="term" value="P:social behavior"/>
    <property type="evidence" value="ECO:0000315"/>
    <property type="project" value="MGI"/>
</dbReference>
<dbReference type="GO" id="GO:0071625">
    <property type="term" value="P:vocalization behavior"/>
    <property type="evidence" value="ECO:0000315"/>
    <property type="project" value="MGI"/>
</dbReference>
<dbReference type="InterPro" id="IPR033237">
    <property type="entry name" value="BRINP"/>
</dbReference>
<dbReference type="InterPro" id="IPR020864">
    <property type="entry name" value="MACPF"/>
</dbReference>
<dbReference type="PANTHER" id="PTHR15564:SF7">
    <property type="entry name" value="BMP_RETINOIC ACID-INDUCIBLE NEURAL-SPECIFIC PROTEIN 1"/>
    <property type="match status" value="1"/>
</dbReference>
<dbReference type="PANTHER" id="PTHR15564">
    <property type="entry name" value="MACPF DOMAIN-CONTAINING PROTEIN"/>
    <property type="match status" value="1"/>
</dbReference>
<dbReference type="Pfam" id="PF19052">
    <property type="entry name" value="BRINP"/>
    <property type="match status" value="1"/>
</dbReference>
<dbReference type="Pfam" id="PF25415">
    <property type="entry name" value="EGF_BRNP1-3"/>
    <property type="match status" value="1"/>
</dbReference>
<dbReference type="Pfam" id="PF01823">
    <property type="entry name" value="MACPF"/>
    <property type="match status" value="1"/>
</dbReference>
<dbReference type="SMART" id="SM00457">
    <property type="entry name" value="MACPF"/>
    <property type="match status" value="1"/>
</dbReference>
<comment type="function">
    <text evidence="3 4 5 6 7">Plays a role in neurogenesis, brain development, and the functioning of GABAergic neurons (PubMed:24528488, PubMed:27042284, PubMed:29960053). May suppress cell cycle progression in postmitotic neurons by inhibiting G1/S transition (PubMed:15193423, PubMed:20025061, PubMed:24528488).</text>
</comment>
<comment type="subcellular location">
    <subcellularLocation>
        <location evidence="1">Cytoplasm</location>
    </subcellularLocation>
</comment>
<comment type="alternative products">
    <event type="alternative splicing"/>
    <isoform>
        <id>Q920P3-1</id>
        <name>1</name>
        <sequence type="displayed"/>
    </isoform>
    <isoform>
        <id>Q920P3-2</id>
        <name>2</name>
        <sequence type="described" ref="VSP_017024 VSP_017025"/>
    </isoform>
</comment>
<comment type="tissue specificity">
    <text evidence="3 4 7">Expressed in brain (PubMed:15193423, PubMed:20025061, PubMed:29960053). Expressed in GABAergic neurons of the pre-frontal cortex (PubMed:29960053). Weakly expressed in embryonic stem (ES) cells and in ES-derived neural stem cells (NSCs) (PubMed:15193423, PubMed:20025061).</text>
</comment>
<comment type="developmental stage">
    <text evidence="3">Expressed from 9.5 dpc.</text>
</comment>
<comment type="induction">
    <text evidence="4">Up-regulated upon differentiation into neuronal cells in the presence of retinoic acid and BDNF. Up-regulated upon differentiation into astroglial cells.</text>
</comment>
<comment type="similarity">
    <text evidence="9">Belongs to the BRINP family.</text>
</comment>
<keyword id="KW-0025">Alternative splicing</keyword>
<keyword id="KW-0131">Cell cycle</keyword>
<keyword id="KW-0963">Cytoplasm</keyword>
<keyword id="KW-0325">Glycoprotein</keyword>
<keyword id="KW-0338">Growth arrest</keyword>
<keyword id="KW-0524">Neurogenesis</keyword>
<keyword id="KW-1185">Reference proteome</keyword>
<keyword id="KW-0732">Signal</keyword>
<protein>
    <recommendedName>
        <fullName>BMP/retinoic acid-inducible neural-specific protein 1</fullName>
    </recommendedName>
    <alternativeName>
        <fullName>Deleted in bladder cancer protein 1 homolog</fullName>
    </alternativeName>
</protein>
<feature type="signal peptide" evidence="2">
    <location>
        <begin position="1"/>
        <end position="16"/>
    </location>
</feature>
<feature type="chain" id="PRO_0000045767" description="BMP/retinoic acid-inducible neural-specific protein 1">
    <location>
        <begin position="17"/>
        <end position="760"/>
    </location>
</feature>
<feature type="domain" description="MACPF">
    <location>
        <begin position="68"/>
        <end position="251"/>
    </location>
</feature>
<feature type="glycosylation site" description="N-linked (GlcNAc...) asparagine" evidence="2">
    <location>
        <position position="156"/>
    </location>
</feature>
<feature type="glycosylation site" description="N-linked (GlcNAc...) asparagine" evidence="2">
    <location>
        <position position="433"/>
    </location>
</feature>
<feature type="glycosylation site" description="N-linked (GlcNAc...) asparagine" evidence="2">
    <location>
        <position position="443"/>
    </location>
</feature>
<feature type="glycosylation site" description="N-linked (GlcNAc...) asparagine" evidence="2">
    <location>
        <position position="553"/>
    </location>
</feature>
<feature type="glycosylation site" description="N-linked (GlcNAc...) asparagine" evidence="2">
    <location>
        <position position="599"/>
    </location>
</feature>
<feature type="glycosylation site" description="N-linked (GlcNAc...) asparagine" evidence="2">
    <location>
        <position position="630"/>
    </location>
</feature>
<feature type="glycosylation site" description="N-linked (GlcNAc...) asparagine" evidence="2">
    <location>
        <position position="676"/>
    </location>
</feature>
<feature type="splice variant" id="VSP_017024" description="In isoform 2." evidence="8">
    <original>DEFKSFMKRLPSN</original>
    <variation>GTQTTTVNASGQT</variation>
    <location>
        <begin position="308"/>
        <end position="320"/>
    </location>
</feature>
<feature type="splice variant" id="VSP_017025" description="In isoform 2." evidence="8">
    <location>
        <begin position="321"/>
        <end position="760"/>
    </location>
</feature>
<feature type="sequence conflict" description="In Ref. 3; BAC25879." evidence="9" ref="3">
    <original>R</original>
    <variation>Q</variation>
    <location>
        <position position="62"/>
    </location>
</feature>
<feature type="sequence conflict" description="In Ref. 2; AAF17579." evidence="9" ref="2">
    <original>AT</original>
    <variation>VP</variation>
    <location>
        <begin position="157"/>
        <end position="158"/>
    </location>
</feature>
<feature type="sequence conflict" description="In Ref. 2; AAF17579." evidence="9" ref="2">
    <original>QM</original>
    <variation>FQR</variation>
    <location>
        <begin position="550"/>
        <end position="551"/>
    </location>
</feature>
<feature type="sequence conflict" description="In Ref. 2; AAF17579." evidence="9" ref="2">
    <original>W</original>
    <variation>V</variation>
    <location>
        <position position="608"/>
    </location>
</feature>
<proteinExistence type="evidence at protein level"/>
<reference key="1">
    <citation type="journal article" date="2004" name="Brain Res. Mol. Brain Res.">
        <title>Identification and characterization of novel developmentally regulated neural-specific proteins, BRINP family.</title>
        <authorList>
            <person name="Kawano H."/>
            <person name="Nakatani T."/>
            <person name="Mori T."/>
            <person name="Ueno S."/>
            <person name="Fukaya M."/>
            <person name="Abe A."/>
            <person name="Kobayashi M."/>
            <person name="Toda F."/>
            <person name="Watanabe M."/>
            <person name="Matsuoka I."/>
        </authorList>
    </citation>
    <scope>NUCLEOTIDE SEQUENCE [GENOMIC DNA / MRNA] (ISOFORM 1)</scope>
    <scope>FUNCTION</scope>
    <scope>TISSUE SPECIFICITY</scope>
    <scope>DEVELOPMENTAL STAGE</scope>
    <source>
        <tissue>Brain</tissue>
        <tissue>Embryonic stem cell</tissue>
    </source>
</reference>
<reference key="2">
    <citation type="submission" date="1999-11" db="EMBL/GenBank/DDBJ databases">
        <title>Mouse DBCCR1 cDNA.</title>
        <authorList>
            <person name="Ochal L.K."/>
            <person name="Sowden M.P."/>
            <person name="Messing E.M."/>
            <person name="Wheeless L.L."/>
            <person name="Reeder J.E."/>
        </authorList>
    </citation>
    <scope>NUCLEOTIDE SEQUENCE [MRNA] (ISOFORM 1)</scope>
    <source>
        <strain>C57BL/6J</strain>
        <tissue>Brain</tissue>
    </source>
</reference>
<reference key="3">
    <citation type="journal article" date="2005" name="Science">
        <title>The transcriptional landscape of the mammalian genome.</title>
        <authorList>
            <person name="Carninci P."/>
            <person name="Kasukawa T."/>
            <person name="Katayama S."/>
            <person name="Gough J."/>
            <person name="Frith M.C."/>
            <person name="Maeda N."/>
            <person name="Oyama R."/>
            <person name="Ravasi T."/>
            <person name="Lenhard B."/>
            <person name="Wells C."/>
            <person name="Kodzius R."/>
            <person name="Shimokawa K."/>
            <person name="Bajic V.B."/>
            <person name="Brenner S.E."/>
            <person name="Batalov S."/>
            <person name="Forrest A.R."/>
            <person name="Zavolan M."/>
            <person name="Davis M.J."/>
            <person name="Wilming L.G."/>
            <person name="Aidinis V."/>
            <person name="Allen J.E."/>
            <person name="Ambesi-Impiombato A."/>
            <person name="Apweiler R."/>
            <person name="Aturaliya R.N."/>
            <person name="Bailey T.L."/>
            <person name="Bansal M."/>
            <person name="Baxter L."/>
            <person name="Beisel K.W."/>
            <person name="Bersano T."/>
            <person name="Bono H."/>
            <person name="Chalk A.M."/>
            <person name="Chiu K.P."/>
            <person name="Choudhary V."/>
            <person name="Christoffels A."/>
            <person name="Clutterbuck D.R."/>
            <person name="Crowe M.L."/>
            <person name="Dalla E."/>
            <person name="Dalrymple B.P."/>
            <person name="de Bono B."/>
            <person name="Della Gatta G."/>
            <person name="di Bernardo D."/>
            <person name="Down T."/>
            <person name="Engstrom P."/>
            <person name="Fagiolini M."/>
            <person name="Faulkner G."/>
            <person name="Fletcher C.F."/>
            <person name="Fukushima T."/>
            <person name="Furuno M."/>
            <person name="Futaki S."/>
            <person name="Gariboldi M."/>
            <person name="Georgii-Hemming P."/>
            <person name="Gingeras T.R."/>
            <person name="Gojobori T."/>
            <person name="Green R.E."/>
            <person name="Gustincich S."/>
            <person name="Harbers M."/>
            <person name="Hayashi Y."/>
            <person name="Hensch T.K."/>
            <person name="Hirokawa N."/>
            <person name="Hill D."/>
            <person name="Huminiecki L."/>
            <person name="Iacono M."/>
            <person name="Ikeo K."/>
            <person name="Iwama A."/>
            <person name="Ishikawa T."/>
            <person name="Jakt M."/>
            <person name="Kanapin A."/>
            <person name="Katoh M."/>
            <person name="Kawasawa Y."/>
            <person name="Kelso J."/>
            <person name="Kitamura H."/>
            <person name="Kitano H."/>
            <person name="Kollias G."/>
            <person name="Krishnan S.P."/>
            <person name="Kruger A."/>
            <person name="Kummerfeld S.K."/>
            <person name="Kurochkin I.V."/>
            <person name="Lareau L.F."/>
            <person name="Lazarevic D."/>
            <person name="Lipovich L."/>
            <person name="Liu J."/>
            <person name="Liuni S."/>
            <person name="McWilliam S."/>
            <person name="Madan Babu M."/>
            <person name="Madera M."/>
            <person name="Marchionni L."/>
            <person name="Matsuda H."/>
            <person name="Matsuzawa S."/>
            <person name="Miki H."/>
            <person name="Mignone F."/>
            <person name="Miyake S."/>
            <person name="Morris K."/>
            <person name="Mottagui-Tabar S."/>
            <person name="Mulder N."/>
            <person name="Nakano N."/>
            <person name="Nakauchi H."/>
            <person name="Ng P."/>
            <person name="Nilsson R."/>
            <person name="Nishiguchi S."/>
            <person name="Nishikawa S."/>
            <person name="Nori F."/>
            <person name="Ohara O."/>
            <person name="Okazaki Y."/>
            <person name="Orlando V."/>
            <person name="Pang K.C."/>
            <person name="Pavan W.J."/>
            <person name="Pavesi G."/>
            <person name="Pesole G."/>
            <person name="Petrovsky N."/>
            <person name="Piazza S."/>
            <person name="Reed J."/>
            <person name="Reid J.F."/>
            <person name="Ring B.Z."/>
            <person name="Ringwald M."/>
            <person name="Rost B."/>
            <person name="Ruan Y."/>
            <person name="Salzberg S.L."/>
            <person name="Sandelin A."/>
            <person name="Schneider C."/>
            <person name="Schoenbach C."/>
            <person name="Sekiguchi K."/>
            <person name="Semple C.A."/>
            <person name="Seno S."/>
            <person name="Sessa L."/>
            <person name="Sheng Y."/>
            <person name="Shibata Y."/>
            <person name="Shimada H."/>
            <person name="Shimada K."/>
            <person name="Silva D."/>
            <person name="Sinclair B."/>
            <person name="Sperling S."/>
            <person name="Stupka E."/>
            <person name="Sugiura K."/>
            <person name="Sultana R."/>
            <person name="Takenaka Y."/>
            <person name="Taki K."/>
            <person name="Tammoja K."/>
            <person name="Tan S.L."/>
            <person name="Tang S."/>
            <person name="Taylor M.S."/>
            <person name="Tegner J."/>
            <person name="Teichmann S.A."/>
            <person name="Ueda H.R."/>
            <person name="van Nimwegen E."/>
            <person name="Verardo R."/>
            <person name="Wei C.L."/>
            <person name="Yagi K."/>
            <person name="Yamanishi H."/>
            <person name="Zabarovsky E."/>
            <person name="Zhu S."/>
            <person name="Zimmer A."/>
            <person name="Hide W."/>
            <person name="Bult C."/>
            <person name="Grimmond S.M."/>
            <person name="Teasdale R.D."/>
            <person name="Liu E.T."/>
            <person name="Brusic V."/>
            <person name="Quackenbush J."/>
            <person name="Wahlestedt C."/>
            <person name="Mattick J.S."/>
            <person name="Hume D.A."/>
            <person name="Kai C."/>
            <person name="Sasaki D."/>
            <person name="Tomaru Y."/>
            <person name="Fukuda S."/>
            <person name="Kanamori-Katayama M."/>
            <person name="Suzuki M."/>
            <person name="Aoki J."/>
            <person name="Arakawa T."/>
            <person name="Iida J."/>
            <person name="Imamura K."/>
            <person name="Itoh M."/>
            <person name="Kato T."/>
            <person name="Kawaji H."/>
            <person name="Kawagashira N."/>
            <person name="Kawashima T."/>
            <person name="Kojima M."/>
            <person name="Kondo S."/>
            <person name="Konno H."/>
            <person name="Nakano K."/>
            <person name="Ninomiya N."/>
            <person name="Nishio T."/>
            <person name="Okada M."/>
            <person name="Plessy C."/>
            <person name="Shibata K."/>
            <person name="Shiraki T."/>
            <person name="Suzuki S."/>
            <person name="Tagami M."/>
            <person name="Waki K."/>
            <person name="Watahiki A."/>
            <person name="Okamura-Oho Y."/>
            <person name="Suzuki H."/>
            <person name="Kawai J."/>
            <person name="Hayashizaki Y."/>
        </authorList>
    </citation>
    <scope>NUCLEOTIDE SEQUENCE [LARGE SCALE MRNA] (ISOFORM 1)</scope>
    <source>
        <strain>C57BL/6J</strain>
        <tissue>Brain</tissue>
        <tissue>Corpora quadrigemina</tissue>
    </source>
</reference>
<reference key="4">
    <citation type="journal article" date="2009" name="PLoS Biol.">
        <title>Lineage-specific biology revealed by a finished genome assembly of the mouse.</title>
        <authorList>
            <person name="Church D.M."/>
            <person name="Goodstadt L."/>
            <person name="Hillier L.W."/>
            <person name="Zody M.C."/>
            <person name="Goldstein S."/>
            <person name="She X."/>
            <person name="Bult C.J."/>
            <person name="Agarwala R."/>
            <person name="Cherry J.L."/>
            <person name="DiCuccio M."/>
            <person name="Hlavina W."/>
            <person name="Kapustin Y."/>
            <person name="Meric P."/>
            <person name="Maglott D."/>
            <person name="Birtle Z."/>
            <person name="Marques A.C."/>
            <person name="Graves T."/>
            <person name="Zhou S."/>
            <person name="Teague B."/>
            <person name="Potamousis K."/>
            <person name="Churas C."/>
            <person name="Place M."/>
            <person name="Herschleb J."/>
            <person name="Runnheim R."/>
            <person name="Forrest D."/>
            <person name="Amos-Landgraf J."/>
            <person name="Schwartz D.C."/>
            <person name="Cheng Z."/>
            <person name="Lindblad-Toh K."/>
            <person name="Eichler E.E."/>
            <person name="Ponting C.P."/>
        </authorList>
    </citation>
    <scope>NUCLEOTIDE SEQUENCE [LARGE SCALE GENOMIC DNA]</scope>
    <source>
        <strain>C57BL/6J</strain>
    </source>
</reference>
<reference key="5">
    <citation type="journal article" date="2004" name="Genome Res.">
        <title>The status, quality, and expansion of the NIH full-length cDNA project: the Mammalian Gene Collection (MGC).</title>
        <authorList>
            <consortium name="The MGC Project Team"/>
        </authorList>
    </citation>
    <scope>NUCLEOTIDE SEQUENCE [LARGE SCALE MRNA] (ISOFORMS 1 AND 2)</scope>
    <source>
        <strain>C57BL/6J</strain>
        <tissue>Brain</tissue>
        <tissue>Eye</tissue>
    </source>
</reference>
<reference key="6">
    <citation type="journal article" date="2010" name="Cell">
        <title>A tissue-specific atlas of mouse protein phosphorylation and expression.</title>
        <authorList>
            <person name="Huttlin E.L."/>
            <person name="Jedrychowski M.P."/>
            <person name="Elias J.E."/>
            <person name="Goswami T."/>
            <person name="Rad R."/>
            <person name="Beausoleil S.A."/>
            <person name="Villen J."/>
            <person name="Haas W."/>
            <person name="Sowa M.E."/>
            <person name="Gygi S.P."/>
        </authorList>
    </citation>
    <scope>IDENTIFICATION BY MASS SPECTROMETRY [LARGE SCALE ANALYSIS]</scope>
    <source>
        <tissue>Brain</tissue>
    </source>
</reference>
<reference key="7">
    <citation type="journal article" date="2010" name="J. Neurosci. Res.">
        <title>Analysis of the expression and function of BRINP family genes during neuronal differentiation in mouse embryonic stem cell-derived neural stem cells.</title>
        <authorList>
            <person name="Terashima M."/>
            <person name="Kobayashi M."/>
            <person name="Motomiya M."/>
            <person name="Inoue N."/>
            <person name="Yoshida T."/>
            <person name="Okano H."/>
            <person name="Iwasaki N."/>
            <person name="Minami A."/>
            <person name="Matsuoka I."/>
        </authorList>
    </citation>
    <scope>FUNCTION</scope>
    <scope>INDUCTION</scope>
    <scope>TISSUE SPECIFICITY</scope>
</reference>
<reference key="8">
    <citation type="journal article" date="2014" name="Mol. Brain">
        <title>Absence of BRINP1 in mice causes increase of hippocampal neurogenesis and behavioral alterations relevant to human psychiatric disorders.</title>
        <authorList>
            <person name="Kobayashi M."/>
            <person name="Nakatani T."/>
            <person name="Koda T."/>
            <person name="Matsumoto K."/>
            <person name="Ozaki R."/>
            <person name="Mochida N."/>
            <person name="Takao K."/>
            <person name="Miyakawa T."/>
            <person name="Matsuoka I."/>
        </authorList>
    </citation>
    <scope>FUNCTION</scope>
</reference>
<reference key="9">
    <citation type="journal article" date="2016" name="Mol. Autism">
        <title>Brinp1(-/-) mice exhibit autism-like behaviour, altered memory, hyperactivity and increased parvalbumin-positive cortical interneuron density.</title>
        <authorList>
            <person name="Berkowicz S.R."/>
            <person name="Featherby T.J."/>
            <person name="Qu Z."/>
            <person name="Giousoh A."/>
            <person name="Borg N.A."/>
            <person name="Heng J.I."/>
            <person name="Whisstock J.C."/>
            <person name="Bird P.I."/>
        </authorList>
    </citation>
    <scope>FUNCTION</scope>
</reference>
<reference key="10">
    <citation type="journal article" date="2018" name="Neurosci. Lett.">
        <title>Decreased parvalbumin and somatostatin neurons in medial prefrontal cortex in BRINP1-KO mice.</title>
        <authorList>
            <person name="Kobayashi M."/>
            <person name="Hayashi Y."/>
            <person name="Fujimoto Y."/>
            <person name="Matsuoka I."/>
        </authorList>
    </citation>
    <scope>FUNCTION</scope>
    <scope>TISSUE SPECIFICITY</scope>
</reference>